<gene>
    <name evidence="1" type="primary">purL</name>
    <name type="ordered locus">lmo1769</name>
</gene>
<evidence type="ECO:0000255" key="1">
    <source>
        <dbReference type="HAMAP-Rule" id="MF_00420"/>
    </source>
</evidence>
<organism>
    <name type="scientific">Listeria monocytogenes serovar 1/2a (strain ATCC BAA-679 / EGD-e)</name>
    <dbReference type="NCBI Taxonomy" id="169963"/>
    <lineage>
        <taxon>Bacteria</taxon>
        <taxon>Bacillati</taxon>
        <taxon>Bacillota</taxon>
        <taxon>Bacilli</taxon>
        <taxon>Bacillales</taxon>
        <taxon>Listeriaceae</taxon>
        <taxon>Listeria</taxon>
    </lineage>
</organism>
<keyword id="KW-0067">ATP-binding</keyword>
<keyword id="KW-0963">Cytoplasm</keyword>
<keyword id="KW-0436">Ligase</keyword>
<keyword id="KW-0460">Magnesium</keyword>
<keyword id="KW-0479">Metal-binding</keyword>
<keyword id="KW-0547">Nucleotide-binding</keyword>
<keyword id="KW-0658">Purine biosynthesis</keyword>
<keyword id="KW-1185">Reference proteome</keyword>
<reference key="1">
    <citation type="journal article" date="2001" name="Science">
        <title>Comparative genomics of Listeria species.</title>
        <authorList>
            <person name="Glaser P."/>
            <person name="Frangeul L."/>
            <person name="Buchrieser C."/>
            <person name="Rusniok C."/>
            <person name="Amend A."/>
            <person name="Baquero F."/>
            <person name="Berche P."/>
            <person name="Bloecker H."/>
            <person name="Brandt P."/>
            <person name="Chakraborty T."/>
            <person name="Charbit A."/>
            <person name="Chetouani F."/>
            <person name="Couve E."/>
            <person name="de Daruvar A."/>
            <person name="Dehoux P."/>
            <person name="Domann E."/>
            <person name="Dominguez-Bernal G."/>
            <person name="Duchaud E."/>
            <person name="Durant L."/>
            <person name="Dussurget O."/>
            <person name="Entian K.-D."/>
            <person name="Fsihi H."/>
            <person name="Garcia-del Portillo F."/>
            <person name="Garrido P."/>
            <person name="Gautier L."/>
            <person name="Goebel W."/>
            <person name="Gomez-Lopez N."/>
            <person name="Hain T."/>
            <person name="Hauf J."/>
            <person name="Jackson D."/>
            <person name="Jones L.-M."/>
            <person name="Kaerst U."/>
            <person name="Kreft J."/>
            <person name="Kuhn M."/>
            <person name="Kunst F."/>
            <person name="Kurapkat G."/>
            <person name="Madueno E."/>
            <person name="Maitournam A."/>
            <person name="Mata Vicente J."/>
            <person name="Ng E."/>
            <person name="Nedjari H."/>
            <person name="Nordsiek G."/>
            <person name="Novella S."/>
            <person name="de Pablos B."/>
            <person name="Perez-Diaz J.-C."/>
            <person name="Purcell R."/>
            <person name="Remmel B."/>
            <person name="Rose M."/>
            <person name="Schlueter T."/>
            <person name="Simoes N."/>
            <person name="Tierrez A."/>
            <person name="Vazquez-Boland J.-A."/>
            <person name="Voss H."/>
            <person name="Wehland J."/>
            <person name="Cossart P."/>
        </authorList>
    </citation>
    <scope>NUCLEOTIDE SEQUENCE [LARGE SCALE GENOMIC DNA]</scope>
    <source>
        <strain>ATCC BAA-679 / EGD-e</strain>
    </source>
</reference>
<dbReference type="EC" id="6.3.5.3" evidence="1"/>
<dbReference type="EMBL" id="AL591981">
    <property type="protein sequence ID" value="CAC99847.1"/>
    <property type="molecule type" value="Genomic_DNA"/>
</dbReference>
<dbReference type="PIR" id="AI1295">
    <property type="entry name" value="AI1295"/>
</dbReference>
<dbReference type="RefSeq" id="WP_010989808.1">
    <property type="nucleotide sequence ID" value="NZ_CP149495.1"/>
</dbReference>
<dbReference type="SMR" id="Q8Y6C1"/>
<dbReference type="STRING" id="169963.gene:17594451"/>
<dbReference type="PaxDb" id="169963-lmo1769"/>
<dbReference type="EnsemblBacteria" id="CAC99847">
    <property type="protein sequence ID" value="CAC99847"/>
    <property type="gene ID" value="CAC99847"/>
</dbReference>
<dbReference type="KEGG" id="lmo:lmo1769"/>
<dbReference type="PATRIC" id="fig|169963.11.peg.1813"/>
<dbReference type="eggNOG" id="COG0046">
    <property type="taxonomic scope" value="Bacteria"/>
</dbReference>
<dbReference type="HOGENOM" id="CLU_003100_0_1_9"/>
<dbReference type="OrthoDB" id="9804441at2"/>
<dbReference type="PhylomeDB" id="Q8Y6C1"/>
<dbReference type="BioCyc" id="LMON169963:LMO1769-MONOMER"/>
<dbReference type="UniPathway" id="UPA00074">
    <property type="reaction ID" value="UER00128"/>
</dbReference>
<dbReference type="Proteomes" id="UP000000817">
    <property type="component" value="Chromosome"/>
</dbReference>
<dbReference type="GO" id="GO:0005737">
    <property type="term" value="C:cytoplasm"/>
    <property type="evidence" value="ECO:0007669"/>
    <property type="project" value="UniProtKB-SubCell"/>
</dbReference>
<dbReference type="GO" id="GO:0005524">
    <property type="term" value="F:ATP binding"/>
    <property type="evidence" value="ECO:0007669"/>
    <property type="project" value="UniProtKB-UniRule"/>
</dbReference>
<dbReference type="GO" id="GO:0000287">
    <property type="term" value="F:magnesium ion binding"/>
    <property type="evidence" value="ECO:0007669"/>
    <property type="project" value="UniProtKB-UniRule"/>
</dbReference>
<dbReference type="GO" id="GO:0004642">
    <property type="term" value="F:phosphoribosylformylglycinamidine synthase activity"/>
    <property type="evidence" value="ECO:0000318"/>
    <property type="project" value="GO_Central"/>
</dbReference>
<dbReference type="GO" id="GO:0006189">
    <property type="term" value="P:'de novo' IMP biosynthetic process"/>
    <property type="evidence" value="ECO:0007669"/>
    <property type="project" value="UniProtKB-UniRule"/>
</dbReference>
<dbReference type="GO" id="GO:0006164">
    <property type="term" value="P:purine nucleotide biosynthetic process"/>
    <property type="evidence" value="ECO:0000318"/>
    <property type="project" value="GO_Central"/>
</dbReference>
<dbReference type="CDD" id="cd02203">
    <property type="entry name" value="PurL_repeat1"/>
    <property type="match status" value="1"/>
</dbReference>
<dbReference type="CDD" id="cd02204">
    <property type="entry name" value="PurL_repeat2"/>
    <property type="match status" value="1"/>
</dbReference>
<dbReference type="FunFam" id="3.30.1330.10:FF:000004">
    <property type="entry name" value="Phosphoribosylformylglycinamidine synthase subunit PurL"/>
    <property type="match status" value="1"/>
</dbReference>
<dbReference type="FunFam" id="3.90.650.10:FF:000009">
    <property type="entry name" value="Phosphoribosylformylglycinamidine synthase subunit PurL"/>
    <property type="match status" value="1"/>
</dbReference>
<dbReference type="FunFam" id="3.90.650.10:FF:000013">
    <property type="entry name" value="Phosphoribosylformylglycinamidine synthase subunit PurL"/>
    <property type="match status" value="1"/>
</dbReference>
<dbReference type="Gene3D" id="3.90.650.10">
    <property type="entry name" value="PurM-like C-terminal domain"/>
    <property type="match status" value="2"/>
</dbReference>
<dbReference type="Gene3D" id="3.30.1330.10">
    <property type="entry name" value="PurM-like, N-terminal domain"/>
    <property type="match status" value="2"/>
</dbReference>
<dbReference type="HAMAP" id="MF_00420">
    <property type="entry name" value="PurL_2"/>
    <property type="match status" value="1"/>
</dbReference>
<dbReference type="InterPro" id="IPR010074">
    <property type="entry name" value="PRibForGlyAmidine_synth_PurL"/>
</dbReference>
<dbReference type="InterPro" id="IPR041609">
    <property type="entry name" value="PurL_linker"/>
</dbReference>
<dbReference type="InterPro" id="IPR010918">
    <property type="entry name" value="PurM-like_C_dom"/>
</dbReference>
<dbReference type="InterPro" id="IPR036676">
    <property type="entry name" value="PurM-like_C_sf"/>
</dbReference>
<dbReference type="InterPro" id="IPR016188">
    <property type="entry name" value="PurM-like_N"/>
</dbReference>
<dbReference type="InterPro" id="IPR036921">
    <property type="entry name" value="PurM-like_N_sf"/>
</dbReference>
<dbReference type="NCBIfam" id="TIGR01736">
    <property type="entry name" value="FGAM_synth_II"/>
    <property type="match status" value="1"/>
</dbReference>
<dbReference type="NCBIfam" id="NF002290">
    <property type="entry name" value="PRK01213.1"/>
    <property type="match status" value="1"/>
</dbReference>
<dbReference type="PANTHER" id="PTHR43555">
    <property type="entry name" value="PHOSPHORIBOSYLFORMYLGLYCINAMIDINE SYNTHASE SUBUNIT PURL"/>
    <property type="match status" value="1"/>
</dbReference>
<dbReference type="PANTHER" id="PTHR43555:SF1">
    <property type="entry name" value="PHOSPHORIBOSYLFORMYLGLYCINAMIDINE SYNTHASE SUBUNIT PURL"/>
    <property type="match status" value="1"/>
</dbReference>
<dbReference type="Pfam" id="PF00586">
    <property type="entry name" value="AIRS"/>
    <property type="match status" value="2"/>
</dbReference>
<dbReference type="Pfam" id="PF02769">
    <property type="entry name" value="AIRS_C"/>
    <property type="match status" value="2"/>
</dbReference>
<dbReference type="Pfam" id="PF18072">
    <property type="entry name" value="FGAR-AT_linker"/>
    <property type="match status" value="1"/>
</dbReference>
<dbReference type="PIRSF" id="PIRSF001587">
    <property type="entry name" value="FGAM_synthase_II"/>
    <property type="match status" value="1"/>
</dbReference>
<dbReference type="SUPFAM" id="SSF56042">
    <property type="entry name" value="PurM C-terminal domain-like"/>
    <property type="match status" value="2"/>
</dbReference>
<dbReference type="SUPFAM" id="SSF55326">
    <property type="entry name" value="PurM N-terminal domain-like"/>
    <property type="match status" value="2"/>
</dbReference>
<protein>
    <recommendedName>
        <fullName evidence="1">Phosphoribosylformylglycinamidine synthase subunit PurL</fullName>
        <shortName evidence="1">FGAM synthase</shortName>
        <ecNumber evidence="1">6.3.5.3</ecNumber>
    </recommendedName>
    <alternativeName>
        <fullName evidence="1">Formylglycinamide ribonucleotide amidotransferase subunit II</fullName>
        <shortName evidence="1">FGAR amidotransferase II</shortName>
        <shortName evidence="1">FGAR-AT II</shortName>
    </alternativeName>
    <alternativeName>
        <fullName evidence="1">Glutamine amidotransferase PurL</fullName>
    </alternativeName>
    <alternativeName>
        <fullName evidence="1">Phosphoribosylformylglycinamidine synthase subunit II</fullName>
    </alternativeName>
</protein>
<feature type="chain" id="PRO_0000100469" description="Phosphoribosylformylglycinamidine synthase subunit PurL">
    <location>
        <begin position="1"/>
        <end position="739"/>
    </location>
</feature>
<feature type="active site" evidence="1">
    <location>
        <position position="53"/>
    </location>
</feature>
<feature type="active site" description="Proton acceptor" evidence="1">
    <location>
        <position position="99"/>
    </location>
</feature>
<feature type="binding site" evidence="1">
    <location>
        <position position="56"/>
    </location>
    <ligand>
        <name>ATP</name>
        <dbReference type="ChEBI" id="CHEBI:30616"/>
    </ligand>
</feature>
<feature type="binding site" evidence="1">
    <location>
        <position position="95"/>
    </location>
    <ligand>
        <name>ATP</name>
        <dbReference type="ChEBI" id="CHEBI:30616"/>
    </ligand>
</feature>
<feature type="binding site" evidence="1">
    <location>
        <position position="97"/>
    </location>
    <ligand>
        <name>Mg(2+)</name>
        <dbReference type="ChEBI" id="CHEBI:18420"/>
        <label>1</label>
    </ligand>
</feature>
<feature type="binding site" evidence="1">
    <location>
        <begin position="98"/>
        <end position="101"/>
    </location>
    <ligand>
        <name>substrate</name>
    </ligand>
</feature>
<feature type="binding site" evidence="1">
    <location>
        <position position="120"/>
    </location>
    <ligand>
        <name>substrate</name>
    </ligand>
</feature>
<feature type="binding site" evidence="1">
    <location>
        <position position="121"/>
    </location>
    <ligand>
        <name>Mg(2+)</name>
        <dbReference type="ChEBI" id="CHEBI:18420"/>
        <label>2</label>
    </ligand>
</feature>
<feature type="binding site" evidence="1">
    <location>
        <position position="244"/>
    </location>
    <ligand>
        <name>substrate</name>
    </ligand>
</feature>
<feature type="binding site" evidence="1">
    <location>
        <position position="274"/>
    </location>
    <ligand>
        <name>Mg(2+)</name>
        <dbReference type="ChEBI" id="CHEBI:18420"/>
        <label>2</label>
    </ligand>
</feature>
<feature type="binding site" evidence="1">
    <location>
        <begin position="318"/>
        <end position="320"/>
    </location>
    <ligand>
        <name>substrate</name>
    </ligand>
</feature>
<feature type="binding site" evidence="1">
    <location>
        <position position="501"/>
    </location>
    <ligand>
        <name>ATP</name>
        <dbReference type="ChEBI" id="CHEBI:30616"/>
    </ligand>
</feature>
<feature type="binding site" evidence="1">
    <location>
        <position position="538"/>
    </location>
    <ligand>
        <name>ATP</name>
        <dbReference type="ChEBI" id="CHEBI:30616"/>
    </ligand>
</feature>
<feature type="binding site" evidence="1">
    <location>
        <position position="539"/>
    </location>
    <ligand>
        <name>Mg(2+)</name>
        <dbReference type="ChEBI" id="CHEBI:18420"/>
        <label>1</label>
    </ligand>
</feature>
<feature type="binding site" evidence="1">
    <location>
        <position position="541"/>
    </location>
    <ligand>
        <name>substrate</name>
    </ligand>
</feature>
<accession>Q8Y6C1</accession>
<sequence>MPNMEPTTKEIKEQKIYQEMGLTDSEYELVCSILGREPNYTETGLFSVMWSEHCSYKNSKPVLRKFPTEGKQVLQGPGEGAGIVDIGDGLGVAFKVESHNHPSYVEPYQGAATGVGGIIRDVFSMGARPIAMLNSLRFGELDTPHAKYLVSEVVAGIAGYGNSIGIPTVGGEIQFDPCYTKNPLVNAMCVGLIEAKDIQKGQAKGIGNPVMYVGAKTGRDGIHGATFASVEFSEEGEQQRSAVQVGDPFMEKLLLEACLDVIRDHSDILVGIQDMGAAGLVSSSSEMASKAGAGLELIMDDVPQRELHMTPYEMLLSESQERMLLCVKKGHVEEIQALFERYGLEAVVIGQVTDDKMYKIIHHGEVVANVPVDALAEDAPVYHKPSKEPTRYQAFQEEEAFVPAMDDVVGVWKELLAQPTIASKRHIYEQYDYQVRTDTAVVPGSDAAIVRVRGTEKAIAMTTDCNSRYLYLDPEVGGAIAVAEAARNIVCSGGKPLAITDGLNFGNPEKPEIFWEIEKAADGISAACLELDTPVISGNVSLYNETDGTGIYPTPVIGMVGLVEDLAHITTQDFKNSGDVIFLIGETKAEYSGSELQKLQQGKISGRAPELDLVTEKKYQQLLLTAIQEGLVASSHDLAEGGFGVALAEATFKAGLGAEVEVPFALNQLFSESQSRFLVSVKPENEAAFAQLMELEKVYRLGVVTEDDTIRVKHKEDQVTAKTTELRSIWEGAIPCLLK</sequence>
<proteinExistence type="inferred from homology"/>
<name>PURL_LISMO</name>
<comment type="function">
    <text evidence="1">Part of the phosphoribosylformylglycinamidine synthase complex involved in the purines biosynthetic pathway. Catalyzes the ATP-dependent conversion of formylglycinamide ribonucleotide (FGAR) and glutamine to yield formylglycinamidine ribonucleotide (FGAM) and glutamate. The FGAM synthase complex is composed of three subunits. PurQ produces an ammonia molecule by converting glutamine to glutamate. PurL transfers the ammonia molecule to FGAR to form FGAM in an ATP-dependent manner. PurS interacts with PurQ and PurL and is thought to assist in the transfer of the ammonia molecule from PurQ to PurL.</text>
</comment>
<comment type="catalytic activity">
    <reaction evidence="1">
        <text>N(2)-formyl-N(1)-(5-phospho-beta-D-ribosyl)glycinamide + L-glutamine + ATP + H2O = 2-formamido-N(1)-(5-O-phospho-beta-D-ribosyl)acetamidine + L-glutamate + ADP + phosphate + H(+)</text>
        <dbReference type="Rhea" id="RHEA:17129"/>
        <dbReference type="ChEBI" id="CHEBI:15377"/>
        <dbReference type="ChEBI" id="CHEBI:15378"/>
        <dbReference type="ChEBI" id="CHEBI:29985"/>
        <dbReference type="ChEBI" id="CHEBI:30616"/>
        <dbReference type="ChEBI" id="CHEBI:43474"/>
        <dbReference type="ChEBI" id="CHEBI:58359"/>
        <dbReference type="ChEBI" id="CHEBI:147286"/>
        <dbReference type="ChEBI" id="CHEBI:147287"/>
        <dbReference type="ChEBI" id="CHEBI:456216"/>
        <dbReference type="EC" id="6.3.5.3"/>
    </reaction>
</comment>
<comment type="pathway">
    <text evidence="1">Purine metabolism; IMP biosynthesis via de novo pathway; 5-amino-1-(5-phospho-D-ribosyl)imidazole from N(2)-formyl-N(1)-(5-phospho-D-ribosyl)glycinamide: step 1/2.</text>
</comment>
<comment type="subunit">
    <text evidence="1">Monomer. Part of the FGAM synthase complex composed of 1 PurL, 1 PurQ and 2 PurS subunits.</text>
</comment>
<comment type="subcellular location">
    <subcellularLocation>
        <location evidence="1">Cytoplasm</location>
    </subcellularLocation>
</comment>
<comment type="similarity">
    <text evidence="1">Belongs to the FGAMS family.</text>
</comment>